<accession>Q9NSI8</accession>
<accession>B3KWJ3</accession>
<accession>F8WAA1</accession>
<accession>Q8NFF7</accession>
<accession>Q9C041</accession>
<evidence type="ECO:0000250" key="1"/>
<evidence type="ECO:0000250" key="2">
    <source>
        <dbReference type="UniProtKB" id="P57725"/>
    </source>
</evidence>
<evidence type="ECO:0000255" key="3">
    <source>
        <dbReference type="PROSITE-ProRule" id="PRU00184"/>
    </source>
</evidence>
<evidence type="ECO:0000255" key="4">
    <source>
        <dbReference type="PROSITE-ProRule" id="PRU00192"/>
    </source>
</evidence>
<evidence type="ECO:0000256" key="5">
    <source>
        <dbReference type="SAM" id="MobiDB-lite"/>
    </source>
</evidence>
<evidence type="ECO:0000269" key="6">
    <source>
    </source>
</evidence>
<evidence type="ECO:0000269" key="7">
    <source>
    </source>
</evidence>
<evidence type="ECO:0000303" key="8">
    <source>
    </source>
</evidence>
<evidence type="ECO:0000303" key="9">
    <source ref="3"/>
</evidence>
<evidence type="ECO:0000305" key="10"/>
<evidence type="ECO:0007744" key="11">
    <source>
    </source>
</evidence>
<evidence type="ECO:0007829" key="12">
    <source>
        <dbReference type="PDB" id="6UZJ"/>
    </source>
</evidence>
<sequence>MLKRKPSNVSEKEKHQKPKRSSSFGNFDRFRNNSLSKPDDSTEAHEGDPTNGSGEQSKTSNNGGGLGKKMRAISWTMKKKVGKKYIKALSEEKDEEDGENAHPYRNSDPVIGTHTEKVSLKASDSMDSLYSGQSSSSGITSCSDGTSNRDSFRLDDDGPYSGPFCGRARVHTDFTPSPYDTDSLKIKKGDIIDIICKTPMGMWTGMLNNKVGNFKFIYVDVISEEEAAPKKIKANRRSNSKKSKTLQEFLERIHLQEYTSTLLLNGYETLEDLKDIKESHLIELNIENPDDRRRLLSAAENFLEEEIIQEQENEPEPLSLSSDISLNKSQLDDCPRDSGCYISSGNSDNGKEDLESENLSDMVHKIIITEPSD</sequence>
<organism>
    <name type="scientific">Homo sapiens</name>
    <name type="common">Human</name>
    <dbReference type="NCBI Taxonomy" id="9606"/>
    <lineage>
        <taxon>Eukaryota</taxon>
        <taxon>Metazoa</taxon>
        <taxon>Chordata</taxon>
        <taxon>Craniata</taxon>
        <taxon>Vertebrata</taxon>
        <taxon>Euteleostomi</taxon>
        <taxon>Mammalia</taxon>
        <taxon>Eutheria</taxon>
        <taxon>Euarchontoglires</taxon>
        <taxon>Primates</taxon>
        <taxon>Haplorrhini</taxon>
        <taxon>Catarrhini</taxon>
        <taxon>Hominidae</taxon>
        <taxon>Homo</taxon>
    </lineage>
</organism>
<dbReference type="EMBL" id="AF222927">
    <property type="protein sequence ID" value="AAG23355.1"/>
    <property type="molecule type" value="mRNA"/>
</dbReference>
<dbReference type="EMBL" id="AF218085">
    <property type="protein sequence ID" value="AAK07746.1"/>
    <property type="status" value="ALT_INIT"/>
    <property type="molecule type" value="mRNA"/>
</dbReference>
<dbReference type="EMBL" id="AF519621">
    <property type="protein sequence ID" value="AAM75349.1"/>
    <property type="molecule type" value="mRNA"/>
</dbReference>
<dbReference type="EMBL" id="AK125144">
    <property type="protein sequence ID" value="BAG54155.1"/>
    <property type="molecule type" value="mRNA"/>
</dbReference>
<dbReference type="EMBL" id="AL163206">
    <property type="protein sequence ID" value="CAB90391.1"/>
    <property type="molecule type" value="Genomic_DNA"/>
</dbReference>
<dbReference type="EMBL" id="AF165138">
    <property type="status" value="NOT_ANNOTATED_CDS"/>
    <property type="molecule type" value="Genomic_DNA"/>
</dbReference>
<dbReference type="EMBL" id="BC029112">
    <property type="protein sequence ID" value="AAH29112.1"/>
    <property type="molecule type" value="mRNA"/>
</dbReference>
<dbReference type="CCDS" id="CCDS42906.1">
    <molecule id="Q9NSI8-1"/>
</dbReference>
<dbReference type="CCDS" id="CCDS58786.1">
    <molecule id="Q9NSI8-3"/>
</dbReference>
<dbReference type="RefSeq" id="NP_001243299.1">
    <molecule id="Q9NSI8-3"/>
    <property type="nucleotide sequence ID" value="NM_001256370.2"/>
</dbReference>
<dbReference type="RefSeq" id="NP_001273452.1">
    <property type="nucleotide sequence ID" value="NM_001286523.1"/>
</dbReference>
<dbReference type="RefSeq" id="NP_071419.3">
    <molecule id="Q9NSI8-1"/>
    <property type="nucleotide sequence ID" value="NM_022136.4"/>
</dbReference>
<dbReference type="PDB" id="6UZJ">
    <property type="method" value="NMR"/>
    <property type="chains" value="A=151-224"/>
</dbReference>
<dbReference type="PDBsum" id="6UZJ"/>
<dbReference type="BMRB" id="Q9NSI8"/>
<dbReference type="SMR" id="Q9NSI8"/>
<dbReference type="BioGRID" id="122054">
    <property type="interactions" value="16"/>
</dbReference>
<dbReference type="FunCoup" id="Q9NSI8">
    <property type="interactions" value="1459"/>
</dbReference>
<dbReference type="IntAct" id="Q9NSI8">
    <property type="interactions" value="12"/>
</dbReference>
<dbReference type="STRING" id="9606.ENSP00000285670"/>
<dbReference type="iPTMnet" id="Q9NSI8"/>
<dbReference type="PhosphoSitePlus" id="Q9NSI8"/>
<dbReference type="BioMuta" id="SAMSN1"/>
<dbReference type="DMDM" id="12230638"/>
<dbReference type="jPOST" id="Q9NSI8"/>
<dbReference type="MassIVE" id="Q9NSI8"/>
<dbReference type="PaxDb" id="9606-ENSP00000285670"/>
<dbReference type="PeptideAtlas" id="Q9NSI8"/>
<dbReference type="ProteomicsDB" id="30460"/>
<dbReference type="ProteomicsDB" id="82558">
    <molecule id="Q9NSI8-1"/>
</dbReference>
<dbReference type="ProteomicsDB" id="82559">
    <molecule id="Q9NSI8-2"/>
</dbReference>
<dbReference type="ProteomicsDB" id="82560">
    <molecule id="Q9NSI8-3"/>
</dbReference>
<dbReference type="Pumba" id="Q9NSI8"/>
<dbReference type="Antibodypedia" id="2139">
    <property type="antibodies" value="286 antibodies from 30 providers"/>
</dbReference>
<dbReference type="DNASU" id="64092"/>
<dbReference type="Ensembl" id="ENST00000285670.7">
    <molecule id="Q9NSI8-3"/>
    <property type="protein sequence ID" value="ENSP00000285670.2"/>
    <property type="gene ID" value="ENSG00000155307.19"/>
</dbReference>
<dbReference type="Ensembl" id="ENST00000400564.5">
    <molecule id="Q9NSI8-2"/>
    <property type="protein sequence ID" value="ENSP00000383409.1"/>
    <property type="gene ID" value="ENSG00000155307.19"/>
</dbReference>
<dbReference type="Ensembl" id="ENST00000400566.6">
    <molecule id="Q9NSI8-1"/>
    <property type="protein sequence ID" value="ENSP00000383411.2"/>
    <property type="gene ID" value="ENSG00000155307.19"/>
</dbReference>
<dbReference type="GeneID" id="64092"/>
<dbReference type="KEGG" id="hsa:64092"/>
<dbReference type="MANE-Select" id="ENST00000400566.6">
    <property type="protein sequence ID" value="ENSP00000383411.2"/>
    <property type="RefSeq nucleotide sequence ID" value="NM_022136.5"/>
    <property type="RefSeq protein sequence ID" value="NP_071419.3"/>
</dbReference>
<dbReference type="UCSC" id="uc002yju.3">
    <molecule id="Q9NSI8-1"/>
    <property type="organism name" value="human"/>
</dbReference>
<dbReference type="AGR" id="HGNC:10528"/>
<dbReference type="CTD" id="64092"/>
<dbReference type="DisGeNET" id="64092"/>
<dbReference type="GeneCards" id="SAMSN1"/>
<dbReference type="HGNC" id="HGNC:10528">
    <property type="gene designation" value="SAMSN1"/>
</dbReference>
<dbReference type="HPA" id="ENSG00000155307">
    <property type="expression patterns" value="Tissue enhanced (bone marrow, lymphoid tissue)"/>
</dbReference>
<dbReference type="MIM" id="607978">
    <property type="type" value="gene"/>
</dbReference>
<dbReference type="neXtProt" id="NX_Q9NSI8"/>
<dbReference type="OpenTargets" id="ENSG00000155307"/>
<dbReference type="PharmGKB" id="PA34939"/>
<dbReference type="VEuPathDB" id="HostDB:ENSG00000155307"/>
<dbReference type="eggNOG" id="KOG4384">
    <property type="taxonomic scope" value="Eukaryota"/>
</dbReference>
<dbReference type="GeneTree" id="ENSGT00940000157806"/>
<dbReference type="HOGENOM" id="CLU_027875_1_0_1"/>
<dbReference type="InParanoid" id="Q9NSI8"/>
<dbReference type="OMA" id="TDMDLPH"/>
<dbReference type="OrthoDB" id="10047268at2759"/>
<dbReference type="PAN-GO" id="Q9NSI8">
    <property type="GO annotations" value="5 GO annotations based on evolutionary models"/>
</dbReference>
<dbReference type="PhylomeDB" id="Q9NSI8"/>
<dbReference type="TreeFam" id="TF350709"/>
<dbReference type="PathwayCommons" id="Q9NSI8"/>
<dbReference type="SignaLink" id="Q9NSI8"/>
<dbReference type="BioGRID-ORCS" id="64092">
    <property type="hits" value="11 hits in 1163 CRISPR screens"/>
</dbReference>
<dbReference type="ChiTaRS" id="SAMSN1">
    <property type="organism name" value="human"/>
</dbReference>
<dbReference type="GenomeRNAi" id="64092"/>
<dbReference type="Pharos" id="Q9NSI8">
    <property type="development level" value="Tbio"/>
</dbReference>
<dbReference type="PRO" id="PR:Q9NSI8"/>
<dbReference type="Proteomes" id="UP000005640">
    <property type="component" value="Chromosome 21"/>
</dbReference>
<dbReference type="RNAct" id="Q9NSI8">
    <property type="molecule type" value="protein"/>
</dbReference>
<dbReference type="Bgee" id="ENSG00000155307">
    <property type="expression patterns" value="Expressed in bone marrow and 175 other cell types or tissues"/>
</dbReference>
<dbReference type="ExpressionAtlas" id="Q9NSI8">
    <property type="expression patterns" value="baseline and differential"/>
</dbReference>
<dbReference type="GO" id="GO:0005737">
    <property type="term" value="C:cytoplasm"/>
    <property type="evidence" value="ECO:0000318"/>
    <property type="project" value="GO_Central"/>
</dbReference>
<dbReference type="GO" id="GO:0005829">
    <property type="term" value="C:cytosol"/>
    <property type="evidence" value="ECO:0007669"/>
    <property type="project" value="Ensembl"/>
</dbReference>
<dbReference type="GO" id="GO:0005634">
    <property type="term" value="C:nucleus"/>
    <property type="evidence" value="ECO:0000314"/>
    <property type="project" value="UniProtKB"/>
</dbReference>
<dbReference type="GO" id="GO:0001726">
    <property type="term" value="C:ruffle"/>
    <property type="evidence" value="ECO:0007669"/>
    <property type="project" value="UniProtKB-SubCell"/>
</dbReference>
<dbReference type="GO" id="GO:0001784">
    <property type="term" value="F:phosphotyrosine residue binding"/>
    <property type="evidence" value="ECO:0000314"/>
    <property type="project" value="MGI"/>
</dbReference>
<dbReference type="GO" id="GO:0003723">
    <property type="term" value="F:RNA binding"/>
    <property type="evidence" value="ECO:0007005"/>
    <property type="project" value="UniProtKB"/>
</dbReference>
<dbReference type="GO" id="GO:0002820">
    <property type="term" value="P:negative regulation of adaptive immune response"/>
    <property type="evidence" value="ECO:0000250"/>
    <property type="project" value="UniProtKB"/>
</dbReference>
<dbReference type="GO" id="GO:0050869">
    <property type="term" value="P:negative regulation of B cell activation"/>
    <property type="evidence" value="ECO:0000250"/>
    <property type="project" value="UniProtKB"/>
</dbReference>
<dbReference type="GO" id="GO:0050732">
    <property type="term" value="P:negative regulation of peptidyl-tyrosine phosphorylation"/>
    <property type="evidence" value="ECO:0000250"/>
    <property type="project" value="UniProtKB"/>
</dbReference>
<dbReference type="GO" id="GO:1902531">
    <property type="term" value="P:regulation of intracellular signal transduction"/>
    <property type="evidence" value="ECO:0000318"/>
    <property type="project" value="GO_Central"/>
</dbReference>
<dbReference type="CDD" id="cd09561">
    <property type="entry name" value="SAM_SAMSN1"/>
    <property type="match status" value="1"/>
</dbReference>
<dbReference type="FunFam" id="2.30.30.40:FF:000021">
    <property type="entry name" value="Putative sam and sh3 domain-containing protein 1"/>
    <property type="match status" value="1"/>
</dbReference>
<dbReference type="FunFam" id="1.10.150.50:FF:000045">
    <property type="entry name" value="SAM domain, SH3 domain and nuclear localization signals 1"/>
    <property type="match status" value="1"/>
</dbReference>
<dbReference type="Gene3D" id="2.30.30.40">
    <property type="entry name" value="SH3 Domains"/>
    <property type="match status" value="1"/>
</dbReference>
<dbReference type="Gene3D" id="1.10.150.50">
    <property type="entry name" value="Transcription Factor, Ets-1"/>
    <property type="match status" value="1"/>
</dbReference>
<dbReference type="InterPro" id="IPR001660">
    <property type="entry name" value="SAM"/>
</dbReference>
<dbReference type="InterPro" id="IPR051725">
    <property type="entry name" value="SAM-SH3_domain_protein"/>
</dbReference>
<dbReference type="InterPro" id="IPR013761">
    <property type="entry name" value="SAM/pointed_sf"/>
</dbReference>
<dbReference type="InterPro" id="IPR037623">
    <property type="entry name" value="SAMSN1_SAM"/>
</dbReference>
<dbReference type="InterPro" id="IPR036028">
    <property type="entry name" value="SH3-like_dom_sf"/>
</dbReference>
<dbReference type="InterPro" id="IPR001452">
    <property type="entry name" value="SH3_domain"/>
</dbReference>
<dbReference type="InterPro" id="IPR021090">
    <property type="entry name" value="SPIDER"/>
</dbReference>
<dbReference type="PANTHER" id="PTHR12301:SF4">
    <property type="entry name" value="SAM DOMAIN-CONTAINING PROTEIN SAMSN-1"/>
    <property type="match status" value="1"/>
</dbReference>
<dbReference type="PANTHER" id="PTHR12301">
    <property type="entry name" value="SAM-DOMAIN, SH3 AND NUCLEAR LOCALIZATION SIGNALS PROTEIN RELATED"/>
    <property type="match status" value="1"/>
</dbReference>
<dbReference type="Pfam" id="PF07647">
    <property type="entry name" value="SAM_2"/>
    <property type="match status" value="1"/>
</dbReference>
<dbReference type="Pfam" id="PF07653">
    <property type="entry name" value="SH3_2"/>
    <property type="match status" value="1"/>
</dbReference>
<dbReference type="Pfam" id="PF12485">
    <property type="entry name" value="SPIDER"/>
    <property type="match status" value="1"/>
</dbReference>
<dbReference type="SMART" id="SM00454">
    <property type="entry name" value="SAM"/>
    <property type="match status" value="1"/>
</dbReference>
<dbReference type="SMART" id="SM00326">
    <property type="entry name" value="SH3"/>
    <property type="match status" value="1"/>
</dbReference>
<dbReference type="SUPFAM" id="SSF47769">
    <property type="entry name" value="SAM/Pointed domain"/>
    <property type="match status" value="1"/>
</dbReference>
<dbReference type="SUPFAM" id="SSF50044">
    <property type="entry name" value="SH3-domain"/>
    <property type="match status" value="1"/>
</dbReference>
<dbReference type="PROSITE" id="PS50105">
    <property type="entry name" value="SAM_DOMAIN"/>
    <property type="match status" value="1"/>
</dbReference>
<dbReference type="PROSITE" id="PS50002">
    <property type="entry name" value="SH3"/>
    <property type="match status" value="1"/>
</dbReference>
<name>SAMN1_HUMAN</name>
<comment type="function">
    <text evidence="1 7">Negative regulator of B-cell activation. Down-regulates cell proliferation (in vitro). Promotes RAC1-dependent membrane ruffle formation and reorganization of the actin cytoskeleton. Regulates cell spreading and cell polarization. Stimulates HDAC1 activity. Regulates LYN activity by modulating its tyrosine phosphorylation (By similarity).</text>
</comment>
<comment type="subunit">
    <text evidence="1">Interacts with FASLG. Interacts with phosphotyrosine containing proteins. Interacts (via SH3 domain) with CTTN. Interacts (phosphorylated at Ser-23) with YWHAB, YWHAE, YWHAG, YWHAH, YWHAZ and SFN. Interacts directly with SAP30 and HDAC1. Identified in a complex with SAP30 and HDAC1 (By similarity).</text>
</comment>
<comment type="subcellular location">
    <subcellularLocation>
        <location evidence="6">Nucleus</location>
    </subcellularLocation>
    <subcellularLocation>
        <location evidence="1">Cytoplasm</location>
    </subcellularLocation>
    <subcellularLocation>
        <location evidence="1">Cell projection</location>
        <location evidence="1">Ruffle</location>
    </subcellularLocation>
    <text evidence="1">Shuttles between cytoplasm and nucleus. Colocalizes with the actin cytoskeleton and actin-rich membrane ruffles (By similarity).</text>
</comment>
<comment type="alternative products">
    <event type="alternative splicing"/>
    <isoform>
        <id>Q9NSI8-1</id>
        <name>1</name>
        <sequence type="displayed"/>
    </isoform>
    <isoform>
        <id>Q9NSI8-2</id>
        <name>2</name>
        <name>b</name>
        <sequence type="described" ref="VSP_008119"/>
    </isoform>
    <isoform>
        <id>Q9NSI8-3</id>
        <name>3</name>
        <sequence type="described" ref="VSP_008120"/>
    </isoform>
</comment>
<comment type="tissue specificity">
    <text evidence="6 7">Detected in peripheral blood B-cells (at protein level). Detected in spleen, liver and peripheral blood.</text>
</comment>
<comment type="induction">
    <text evidence="7">Up-regulated in peripheral blood B-cells by IL4, IL13 and by CD40 stimulation.</text>
</comment>
<comment type="sequence caution" evidence="10">
    <conflict type="erroneous initiation">
        <sequence resource="EMBL-CDS" id="AAK07746"/>
    </conflict>
    <text>Truncated N-terminus.</text>
</comment>
<proteinExistence type="evidence at protein level"/>
<protein>
    <recommendedName>
        <fullName>SAM domain-containing protein SAMSN-1</fullName>
    </recommendedName>
    <alternativeName>
        <fullName>Hematopoietic adaptor containing SH3 and SAM domains 1</fullName>
    </alternativeName>
    <alternativeName>
        <fullName>Nash1</fullName>
    </alternativeName>
    <alternativeName>
        <fullName>SAM domain, SH3 domain and nuclear localization signals protein 1</fullName>
    </alternativeName>
    <alternativeName>
        <fullName>SH3-SAM adaptor protein</fullName>
    </alternativeName>
</protein>
<feature type="chain" id="PRO_0000097574" description="SAM domain-containing protein SAMSN-1">
    <location>
        <begin position="1"/>
        <end position="373"/>
    </location>
</feature>
<feature type="domain" description="SH3" evidence="4">
    <location>
        <begin position="163"/>
        <end position="224"/>
    </location>
</feature>
<feature type="domain" description="SAM" evidence="3">
    <location>
        <begin position="241"/>
        <end position="305"/>
    </location>
</feature>
<feature type="region of interest" description="Disordered" evidence="5">
    <location>
        <begin position="1"/>
        <end position="72"/>
    </location>
</feature>
<feature type="region of interest" description="Disordered" evidence="5">
    <location>
        <begin position="91"/>
        <end position="153"/>
    </location>
</feature>
<feature type="region of interest" description="Disordered" evidence="5">
    <location>
        <begin position="337"/>
        <end position="359"/>
    </location>
</feature>
<feature type="short sequence motif" description="Important for interaction with 14-3-3 proteins" evidence="1">
    <location>
        <begin position="20"/>
        <end position="25"/>
    </location>
</feature>
<feature type="compositionally biased region" description="Basic and acidic residues" evidence="5">
    <location>
        <begin position="37"/>
        <end position="48"/>
    </location>
</feature>
<feature type="compositionally biased region" description="Polar residues" evidence="5">
    <location>
        <begin position="50"/>
        <end position="61"/>
    </location>
</feature>
<feature type="compositionally biased region" description="Low complexity" evidence="5">
    <location>
        <begin position="123"/>
        <end position="146"/>
    </location>
</feature>
<feature type="modified residue" description="Phosphoserine" evidence="11">
    <location>
        <position position="23"/>
    </location>
</feature>
<feature type="modified residue" description="Phosphoserine" evidence="11">
    <location>
        <position position="34"/>
    </location>
</feature>
<feature type="modified residue" description="Phosphoserine" evidence="11">
    <location>
        <position position="74"/>
    </location>
</feature>
<feature type="modified residue" description="Phosphothreonine" evidence="11">
    <location>
        <position position="76"/>
    </location>
</feature>
<feature type="modified residue" description="Phosphoserine" evidence="11">
    <location>
        <position position="90"/>
    </location>
</feature>
<feature type="modified residue" description="Phosphoserine" evidence="11">
    <location>
        <position position="119"/>
    </location>
</feature>
<feature type="modified residue" description="Phosphotyrosine" evidence="2">
    <location>
        <position position="160"/>
    </location>
</feature>
<feature type="splice variant" id="VSP_008120" description="In isoform 3." evidence="8">
    <original>MLKRKPSNVSEKEKHQKPK</original>
    <variation>MEIRLDTLSASLGRSSTLNNCNLEDKLAWYEGEAYMWHHWKPFPENPLWTCLDFQIAQVGPWDHCSSCIRHTRLKSSCSDMDLLHSW</variation>
    <location>
        <begin position="1"/>
        <end position="19"/>
    </location>
</feature>
<feature type="splice variant" id="VSP_008119" description="In isoform 2." evidence="9">
    <location>
        <begin position="19"/>
        <end position="186"/>
    </location>
</feature>
<feature type="sequence variant" id="VAR_051331" description="In dbSNP:rs34607574.">
    <original>G</original>
    <variation>A</variation>
    <location>
        <position position="63"/>
    </location>
</feature>
<feature type="sequence conflict" description="In Ref. 4; BAG54155." evidence="10" ref="4">
    <original>R</original>
    <variation>G</variation>
    <location>
        <position position="105"/>
    </location>
</feature>
<feature type="strand" evidence="12">
    <location>
        <begin position="166"/>
        <end position="170"/>
    </location>
</feature>
<feature type="strand" evidence="12">
    <location>
        <begin position="191"/>
        <end position="197"/>
    </location>
</feature>
<feature type="strand" evidence="12">
    <location>
        <begin position="203"/>
        <end position="207"/>
    </location>
</feature>
<feature type="strand" evidence="12">
    <location>
        <begin position="210"/>
        <end position="214"/>
    </location>
</feature>
<feature type="helix" evidence="12">
    <location>
        <begin position="216"/>
        <end position="218"/>
    </location>
</feature>
<feature type="strand" evidence="12">
    <location>
        <begin position="219"/>
        <end position="222"/>
    </location>
</feature>
<feature type="sequence conflict" description="In Ref. 2; AAK07746." evidence="10" ref="2">
    <original>N</original>
    <variation>D</variation>
    <location sequence="Q9NSI8-3">
        <position position="20"/>
    </location>
</feature>
<feature type="sequence conflict" description="In Ref. 2; AAK07746." evidence="10" ref="2">
    <original>H</original>
    <variation>Y</variation>
    <location sequence="Q9NSI8-3">
        <position position="64"/>
    </location>
</feature>
<reference key="1">
    <citation type="submission" date="2000-01" db="EMBL/GenBank/DDBJ databases">
        <title>A novel gene, located on human chromosome 21q11.</title>
        <authorList>
            <person name="Groet J."/>
            <person name="Blechschmidt K."/>
            <person name="Yaspo M."/>
            <person name="Rosenthal A."/>
            <person name="Nizetic D."/>
        </authorList>
    </citation>
    <scope>NUCLEOTIDE SEQUENCE [MRNA] (ISOFORM 1)</scope>
</reference>
<reference key="2">
    <citation type="journal article" date="2001" name="Oncogene">
        <title>HACS1 encodes a novel SH3-SAM adaptor protein differentially expressed in normal and malignant hematopoietic cells.</title>
        <authorList>
            <person name="Claudio J.O."/>
            <person name="Zhu Y.X."/>
            <person name="Benn S.J."/>
            <person name="Shukla A.H."/>
            <person name="McGlade C.J."/>
            <person name="Falcioni N."/>
            <person name="Stewart A.K."/>
        </authorList>
    </citation>
    <scope>NUCLEOTIDE SEQUENCE [MRNA] (ISOFORM 3)</scope>
</reference>
<reference key="3">
    <citation type="submission" date="2002-06" db="EMBL/GenBank/DDBJ databases">
        <title>Transcriptional map of the juxtacentromeric region of human chromosome 21.</title>
        <authorList>
            <person name="Brun M.-E."/>
            <person name="Ruault M."/>
            <person name="Roizes G."/>
            <person name="De Sario A."/>
        </authorList>
    </citation>
    <scope>NUCLEOTIDE SEQUENCE [MRNA] (ISOFORM 2)</scope>
    <source>
        <tissue>Thymus</tissue>
    </source>
</reference>
<reference key="4">
    <citation type="journal article" date="2004" name="Nat. Genet.">
        <title>Complete sequencing and characterization of 21,243 full-length human cDNAs.</title>
        <authorList>
            <person name="Ota T."/>
            <person name="Suzuki Y."/>
            <person name="Nishikawa T."/>
            <person name="Otsuki T."/>
            <person name="Sugiyama T."/>
            <person name="Irie R."/>
            <person name="Wakamatsu A."/>
            <person name="Hayashi K."/>
            <person name="Sato H."/>
            <person name="Nagai K."/>
            <person name="Kimura K."/>
            <person name="Makita H."/>
            <person name="Sekine M."/>
            <person name="Obayashi M."/>
            <person name="Nishi T."/>
            <person name="Shibahara T."/>
            <person name="Tanaka T."/>
            <person name="Ishii S."/>
            <person name="Yamamoto J."/>
            <person name="Saito K."/>
            <person name="Kawai Y."/>
            <person name="Isono Y."/>
            <person name="Nakamura Y."/>
            <person name="Nagahari K."/>
            <person name="Murakami K."/>
            <person name="Yasuda T."/>
            <person name="Iwayanagi T."/>
            <person name="Wagatsuma M."/>
            <person name="Shiratori A."/>
            <person name="Sudo H."/>
            <person name="Hosoiri T."/>
            <person name="Kaku Y."/>
            <person name="Kodaira H."/>
            <person name="Kondo H."/>
            <person name="Sugawara M."/>
            <person name="Takahashi M."/>
            <person name="Kanda K."/>
            <person name="Yokoi T."/>
            <person name="Furuya T."/>
            <person name="Kikkawa E."/>
            <person name="Omura Y."/>
            <person name="Abe K."/>
            <person name="Kamihara K."/>
            <person name="Katsuta N."/>
            <person name="Sato K."/>
            <person name="Tanikawa M."/>
            <person name="Yamazaki M."/>
            <person name="Ninomiya K."/>
            <person name="Ishibashi T."/>
            <person name="Yamashita H."/>
            <person name="Murakawa K."/>
            <person name="Fujimori K."/>
            <person name="Tanai H."/>
            <person name="Kimata M."/>
            <person name="Watanabe M."/>
            <person name="Hiraoka S."/>
            <person name="Chiba Y."/>
            <person name="Ishida S."/>
            <person name="Ono Y."/>
            <person name="Takiguchi S."/>
            <person name="Watanabe S."/>
            <person name="Yosida M."/>
            <person name="Hotuta T."/>
            <person name="Kusano J."/>
            <person name="Kanehori K."/>
            <person name="Takahashi-Fujii A."/>
            <person name="Hara H."/>
            <person name="Tanase T.-O."/>
            <person name="Nomura Y."/>
            <person name="Togiya S."/>
            <person name="Komai F."/>
            <person name="Hara R."/>
            <person name="Takeuchi K."/>
            <person name="Arita M."/>
            <person name="Imose N."/>
            <person name="Musashino K."/>
            <person name="Yuuki H."/>
            <person name="Oshima A."/>
            <person name="Sasaki N."/>
            <person name="Aotsuka S."/>
            <person name="Yoshikawa Y."/>
            <person name="Matsunawa H."/>
            <person name="Ichihara T."/>
            <person name="Shiohata N."/>
            <person name="Sano S."/>
            <person name="Moriya S."/>
            <person name="Momiyama H."/>
            <person name="Satoh N."/>
            <person name="Takami S."/>
            <person name="Terashima Y."/>
            <person name="Suzuki O."/>
            <person name="Nakagawa S."/>
            <person name="Senoh A."/>
            <person name="Mizoguchi H."/>
            <person name="Goto Y."/>
            <person name="Shimizu F."/>
            <person name="Wakebe H."/>
            <person name="Hishigaki H."/>
            <person name="Watanabe T."/>
            <person name="Sugiyama A."/>
            <person name="Takemoto M."/>
            <person name="Kawakami B."/>
            <person name="Yamazaki M."/>
            <person name="Watanabe K."/>
            <person name="Kumagai A."/>
            <person name="Itakura S."/>
            <person name="Fukuzumi Y."/>
            <person name="Fujimori Y."/>
            <person name="Komiyama M."/>
            <person name="Tashiro H."/>
            <person name="Tanigami A."/>
            <person name="Fujiwara T."/>
            <person name="Ono T."/>
            <person name="Yamada K."/>
            <person name="Fujii Y."/>
            <person name="Ozaki K."/>
            <person name="Hirao M."/>
            <person name="Ohmori Y."/>
            <person name="Kawabata A."/>
            <person name="Hikiji T."/>
            <person name="Kobatake N."/>
            <person name="Inagaki H."/>
            <person name="Ikema Y."/>
            <person name="Okamoto S."/>
            <person name="Okitani R."/>
            <person name="Kawakami T."/>
            <person name="Noguchi S."/>
            <person name="Itoh T."/>
            <person name="Shigeta K."/>
            <person name="Senba T."/>
            <person name="Matsumura K."/>
            <person name="Nakajima Y."/>
            <person name="Mizuno T."/>
            <person name="Morinaga M."/>
            <person name="Sasaki M."/>
            <person name="Togashi T."/>
            <person name="Oyama M."/>
            <person name="Hata H."/>
            <person name="Watanabe M."/>
            <person name="Komatsu T."/>
            <person name="Mizushima-Sugano J."/>
            <person name="Satoh T."/>
            <person name="Shirai Y."/>
            <person name="Takahashi Y."/>
            <person name="Nakagawa K."/>
            <person name="Okumura K."/>
            <person name="Nagase T."/>
            <person name="Nomura N."/>
            <person name="Kikuchi H."/>
            <person name="Masuho Y."/>
            <person name="Yamashita R."/>
            <person name="Nakai K."/>
            <person name="Yada T."/>
            <person name="Nakamura Y."/>
            <person name="Ohara O."/>
            <person name="Isogai T."/>
            <person name="Sugano S."/>
        </authorList>
    </citation>
    <scope>NUCLEOTIDE SEQUENCE [LARGE SCALE MRNA]</scope>
</reference>
<reference key="5">
    <citation type="journal article" date="2000" name="Nature">
        <title>The DNA sequence of human chromosome 21.</title>
        <authorList>
            <person name="Hattori M."/>
            <person name="Fujiyama A."/>
            <person name="Taylor T.D."/>
            <person name="Watanabe H."/>
            <person name="Yada T."/>
            <person name="Park H.-S."/>
            <person name="Toyoda A."/>
            <person name="Ishii K."/>
            <person name="Totoki Y."/>
            <person name="Choi D.-K."/>
            <person name="Groner Y."/>
            <person name="Soeda E."/>
            <person name="Ohki M."/>
            <person name="Takagi T."/>
            <person name="Sakaki Y."/>
            <person name="Taudien S."/>
            <person name="Blechschmidt K."/>
            <person name="Polley A."/>
            <person name="Menzel U."/>
            <person name="Delabar J."/>
            <person name="Kumpf K."/>
            <person name="Lehmann R."/>
            <person name="Patterson D."/>
            <person name="Reichwald K."/>
            <person name="Rump A."/>
            <person name="Schillhabel M."/>
            <person name="Schudy A."/>
            <person name="Zimmermann W."/>
            <person name="Rosenthal A."/>
            <person name="Kudoh J."/>
            <person name="Shibuya K."/>
            <person name="Kawasaki K."/>
            <person name="Asakawa S."/>
            <person name="Shintani A."/>
            <person name="Sasaki T."/>
            <person name="Nagamine K."/>
            <person name="Mitsuyama S."/>
            <person name="Antonarakis S.E."/>
            <person name="Minoshima S."/>
            <person name="Shimizu N."/>
            <person name="Nordsiek G."/>
            <person name="Hornischer K."/>
            <person name="Brandt P."/>
            <person name="Scharfe M."/>
            <person name="Schoen O."/>
            <person name="Desario A."/>
            <person name="Reichelt J."/>
            <person name="Kauer G."/>
            <person name="Bloecker H."/>
            <person name="Ramser J."/>
            <person name="Beck A."/>
            <person name="Klages S."/>
            <person name="Hennig S."/>
            <person name="Riesselmann L."/>
            <person name="Dagand E."/>
            <person name="Wehrmeyer S."/>
            <person name="Borzym K."/>
            <person name="Gardiner K."/>
            <person name="Nizetic D."/>
            <person name="Francis F."/>
            <person name="Lehrach H."/>
            <person name="Reinhardt R."/>
            <person name="Yaspo M.-L."/>
        </authorList>
    </citation>
    <scope>NUCLEOTIDE SEQUENCE [LARGE SCALE GENOMIC DNA]</scope>
</reference>
<reference key="6">
    <citation type="journal article" date="2004" name="Genome Res.">
        <title>The status, quality, and expansion of the NIH full-length cDNA project: the Mammalian Gene Collection (MGC).</title>
        <authorList>
            <consortium name="The MGC Project Team"/>
        </authorList>
    </citation>
    <scope>NUCLEOTIDE SEQUENCE [LARGE SCALE MRNA] (ISOFORM 1)</scope>
    <source>
        <tissue>Lymph</tissue>
    </source>
</reference>
<reference key="7">
    <citation type="journal article" date="2001" name="Biochem. Biophys. Res. Commun.">
        <title>Identification of Nash1, a novel protein containing a nuclear localization signal, a sterile alpha motif, and an SH3 domain preferentially expressed in mast cells.</title>
        <authorList>
            <person name="Uchida T."/>
            <person name="Nakao A."/>
            <person name="Nakano N."/>
            <person name="Kuramasu A."/>
            <person name="Saito H."/>
            <person name="Okumura K."/>
            <person name="Ra C."/>
            <person name="Ogawa H."/>
        </authorList>
    </citation>
    <scope>SUBCELLULAR LOCATION</scope>
    <scope>TISSUE SPECIFICITY</scope>
</reference>
<reference key="8">
    <citation type="journal article" date="2004" name="J. Exp. Med.">
        <title>The SH3-SAM adaptor HACS1 is up-regulated in B cell activation signaling cascades.</title>
        <authorList>
            <person name="Zhu Y.X."/>
            <person name="Benn S."/>
            <person name="Li Z.H."/>
            <person name="Wei E."/>
            <person name="Masih-Khan E."/>
            <person name="Trieu Y."/>
            <person name="Bali M."/>
            <person name="McGlade C.J."/>
            <person name="Claudio J.O."/>
            <person name="Stewart A.K."/>
        </authorList>
    </citation>
    <scope>FUNCTION</scope>
    <scope>INDUCTION</scope>
    <scope>TISSUE SPECIFICITY</scope>
</reference>
<reference key="9">
    <citation type="journal article" date="2009" name="BMC Immunol.">
        <title>Identification of SH3 domain interaction partners of human FasL (CD178) by phage display screening.</title>
        <authorList>
            <person name="Voss M."/>
            <person name="Lettau M."/>
            <person name="Janssen O."/>
        </authorList>
    </citation>
    <scope>INTERACTION WITH FASLG</scope>
</reference>
<reference key="10">
    <citation type="journal article" date="2011" name="BMC Syst. Biol.">
        <title>Initial characterization of the human central proteome.</title>
        <authorList>
            <person name="Burkard T.R."/>
            <person name="Planyavsky M."/>
            <person name="Kaupe I."/>
            <person name="Breitwieser F.P."/>
            <person name="Buerckstuemmer T."/>
            <person name="Bennett K.L."/>
            <person name="Superti-Furga G."/>
            <person name="Colinge J."/>
        </authorList>
    </citation>
    <scope>IDENTIFICATION BY MASS SPECTROMETRY [LARGE SCALE ANALYSIS]</scope>
</reference>
<reference key="11">
    <citation type="journal article" date="2013" name="J. Proteome Res.">
        <title>Toward a comprehensive characterization of a human cancer cell phosphoproteome.</title>
        <authorList>
            <person name="Zhou H."/>
            <person name="Di Palma S."/>
            <person name="Preisinger C."/>
            <person name="Peng M."/>
            <person name="Polat A.N."/>
            <person name="Heck A.J."/>
            <person name="Mohammed S."/>
        </authorList>
    </citation>
    <scope>PHOSPHORYLATION [LARGE SCALE ANALYSIS] AT SER-23; SER-34; SER-74; THR-76; SER-90 AND SER-119</scope>
    <scope>IDENTIFICATION BY MASS SPECTROMETRY [LARGE SCALE ANALYSIS]</scope>
    <source>
        <tissue>Erythroleukemia</tissue>
    </source>
</reference>
<reference key="12">
    <citation type="submission" date="2010-02" db="PDB data bank">
        <title>NMR solution structure of the HACS1 SH3 domain.</title>
        <authorList>
            <person name="Donaldson L."/>
        </authorList>
    </citation>
    <scope>STRUCTURE BY NMR OF 162-224</scope>
</reference>
<gene>
    <name type="primary">SAMSN1</name>
    <name type="synonym">HACS1</name>
</gene>
<keyword id="KW-0002">3D-structure</keyword>
<keyword id="KW-0025">Alternative splicing</keyword>
<keyword id="KW-0966">Cell projection</keyword>
<keyword id="KW-0963">Cytoplasm</keyword>
<keyword id="KW-0539">Nucleus</keyword>
<keyword id="KW-0597">Phosphoprotein</keyword>
<keyword id="KW-1267">Proteomics identification</keyword>
<keyword id="KW-1185">Reference proteome</keyword>
<keyword id="KW-0728">SH3 domain</keyword>